<reference key="1">
    <citation type="journal article" date="2011" name="Nature">
        <title>A high-resolution map of human evolutionary constraint using 29 mammals.</title>
        <authorList>
            <person name="Lindblad-Toh K."/>
            <person name="Garber M."/>
            <person name="Zuk O."/>
            <person name="Lin M.F."/>
            <person name="Parker B.J."/>
            <person name="Washietl S."/>
            <person name="Kheradpour P."/>
            <person name="Ernst J."/>
            <person name="Jordan G."/>
            <person name="Mauceli E."/>
            <person name="Ward L.D."/>
            <person name="Lowe C.B."/>
            <person name="Holloway A.K."/>
            <person name="Clamp M."/>
            <person name="Gnerre S."/>
            <person name="Alfoldi J."/>
            <person name="Beal K."/>
            <person name="Chang J."/>
            <person name="Clawson H."/>
            <person name="Cuff J."/>
            <person name="Di Palma F."/>
            <person name="Fitzgerald S."/>
            <person name="Flicek P."/>
            <person name="Guttman M."/>
            <person name="Hubisz M.J."/>
            <person name="Jaffe D.B."/>
            <person name="Jungreis I."/>
            <person name="Kent W.J."/>
            <person name="Kostka D."/>
            <person name="Lara M."/>
            <person name="Martins A.L."/>
            <person name="Massingham T."/>
            <person name="Moltke I."/>
            <person name="Raney B.J."/>
            <person name="Rasmussen M.D."/>
            <person name="Robinson J."/>
            <person name="Stark A."/>
            <person name="Vilella A.J."/>
            <person name="Wen J."/>
            <person name="Xie X."/>
            <person name="Zody M.C."/>
            <person name="Baldwin J."/>
            <person name="Bloom T."/>
            <person name="Chin C.W."/>
            <person name="Heiman D."/>
            <person name="Nicol R."/>
            <person name="Nusbaum C."/>
            <person name="Young S."/>
            <person name="Wilkinson J."/>
            <person name="Worley K.C."/>
            <person name="Kovar C.L."/>
            <person name="Muzny D.M."/>
            <person name="Gibbs R.A."/>
            <person name="Cree A."/>
            <person name="Dihn H.H."/>
            <person name="Fowler G."/>
            <person name="Jhangiani S."/>
            <person name="Joshi V."/>
            <person name="Lee S."/>
            <person name="Lewis L.R."/>
            <person name="Nazareth L.V."/>
            <person name="Okwuonu G."/>
            <person name="Santibanez J."/>
            <person name="Warren W.C."/>
            <person name="Mardis E.R."/>
            <person name="Weinstock G.M."/>
            <person name="Wilson R.K."/>
            <person name="Delehaunty K."/>
            <person name="Dooling D."/>
            <person name="Fronik C."/>
            <person name="Fulton L."/>
            <person name="Fulton B."/>
            <person name="Graves T."/>
            <person name="Minx P."/>
            <person name="Sodergren E."/>
            <person name="Birney E."/>
            <person name="Margulies E.H."/>
            <person name="Herrero J."/>
            <person name="Green E.D."/>
            <person name="Haussler D."/>
            <person name="Siepel A."/>
            <person name="Goldman N."/>
            <person name="Pollard K.S."/>
            <person name="Pedersen J.S."/>
            <person name="Lander E.S."/>
            <person name="Kellis M."/>
        </authorList>
    </citation>
    <scope>NUCLEOTIDE SEQUENCE [LARGE SCALE GENOMIC DNA]</scope>
    <source>
        <strain>2N</strain>
    </source>
</reference>
<sequence>MKAVLLVVAALFLAGSQARHFWQQDDPKTSWDVVKEFANKYVDAVKESGKGYVEQLDASSLGQQLNLRLSDNWDTLSTILTKLQADFGLATQEFWDTLEKETEWLKQIVSEDLQDVKHKVQPYLENFQKKVQEEVEHYREKVRPLGIELRDGARQKLQELQEKLTPLGEDLRDRTREHVDVLRTQLAPFSEEMRQRLAKRLEELKDSATLADYHAKASEHLKMLGEKAKPALEDLRQGLLPVLENLKASILSSIDQASKQLAAQ</sequence>
<protein>
    <recommendedName>
        <fullName>Apolipoprotein A-I</fullName>
        <shortName>Apo-AI</shortName>
        <shortName>ApoA-I</shortName>
    </recommendedName>
    <alternativeName>
        <fullName>Apolipoprotein A1</fullName>
    </alternativeName>
    <component>
        <recommendedName>
            <fullName>Proapolipoprotein A-I</fullName>
            <shortName>ProapoA-I</shortName>
        </recommendedName>
    </component>
    <component>
        <recommendedName>
            <fullName>Truncated apolipoprotein A-I</fullName>
        </recommendedName>
    </component>
</protein>
<dbReference type="EMBL" id="AAKN02024841">
    <property type="status" value="NOT_ANNOTATED_CDS"/>
    <property type="molecule type" value="Genomic_DNA"/>
</dbReference>
<dbReference type="SMR" id="H0VVW3"/>
<dbReference type="STRING" id="10141.ENSCPOP00000032306"/>
<dbReference type="Ensembl" id="ENSCPOT00000040643.1">
    <property type="protein sequence ID" value="ENSCPOP00000032306.1"/>
    <property type="gene ID" value="ENSCPOG00000020511.2"/>
</dbReference>
<dbReference type="VEuPathDB" id="HostDB:ENSCPOG00000020511"/>
<dbReference type="eggNOG" id="ENOG502S1XQ">
    <property type="taxonomic scope" value="Eukaryota"/>
</dbReference>
<dbReference type="GeneTree" id="ENSGT00950000182929"/>
<dbReference type="HOGENOM" id="CLU_058447_1_0_1"/>
<dbReference type="InParanoid" id="H0VVW3"/>
<dbReference type="OMA" id="AKASCHY"/>
<dbReference type="TreeFam" id="TF334458"/>
<dbReference type="Proteomes" id="UP000005447">
    <property type="component" value="Unassembled WGS sequence"/>
</dbReference>
<dbReference type="Bgee" id="ENSCPOG00000020511">
    <property type="expression patterns" value="Expressed in heart and 7 other cell types or tissues"/>
</dbReference>
<dbReference type="GO" id="GO:0042627">
    <property type="term" value="C:chylomicron"/>
    <property type="evidence" value="ECO:0007669"/>
    <property type="project" value="TreeGrafter"/>
</dbReference>
<dbReference type="GO" id="GO:0030139">
    <property type="term" value="C:endocytic vesicle"/>
    <property type="evidence" value="ECO:0007669"/>
    <property type="project" value="Ensembl"/>
</dbReference>
<dbReference type="GO" id="GO:1903561">
    <property type="term" value="C:extracellular vesicle"/>
    <property type="evidence" value="ECO:0007669"/>
    <property type="project" value="TreeGrafter"/>
</dbReference>
<dbReference type="GO" id="GO:0034362">
    <property type="term" value="C:low-density lipoprotein particle"/>
    <property type="evidence" value="ECO:0007669"/>
    <property type="project" value="TreeGrafter"/>
</dbReference>
<dbReference type="GO" id="GO:0034366">
    <property type="term" value="C:spherical high-density lipoprotein particle"/>
    <property type="evidence" value="ECO:0007669"/>
    <property type="project" value="Ensembl"/>
</dbReference>
<dbReference type="GO" id="GO:0034361">
    <property type="term" value="C:very-low-density lipoprotein particle"/>
    <property type="evidence" value="ECO:0007669"/>
    <property type="project" value="Ensembl"/>
</dbReference>
<dbReference type="GO" id="GO:0001540">
    <property type="term" value="F:amyloid-beta binding"/>
    <property type="evidence" value="ECO:0007669"/>
    <property type="project" value="Ensembl"/>
</dbReference>
<dbReference type="GO" id="GO:0034191">
    <property type="term" value="F:apolipoprotein A-I receptor binding"/>
    <property type="evidence" value="ECO:0007669"/>
    <property type="project" value="Ensembl"/>
</dbReference>
<dbReference type="GO" id="GO:0045499">
    <property type="term" value="F:chemorepellent activity"/>
    <property type="evidence" value="ECO:0007669"/>
    <property type="project" value="Ensembl"/>
</dbReference>
<dbReference type="GO" id="GO:0015485">
    <property type="term" value="F:cholesterol binding"/>
    <property type="evidence" value="ECO:0007669"/>
    <property type="project" value="Ensembl"/>
</dbReference>
<dbReference type="GO" id="GO:0120020">
    <property type="term" value="F:cholesterol transfer activity"/>
    <property type="evidence" value="ECO:0007669"/>
    <property type="project" value="Ensembl"/>
</dbReference>
<dbReference type="GO" id="GO:0019899">
    <property type="term" value="F:enzyme binding"/>
    <property type="evidence" value="ECO:0007669"/>
    <property type="project" value="Ensembl"/>
</dbReference>
<dbReference type="GO" id="GO:0031072">
    <property type="term" value="F:heat shock protein binding"/>
    <property type="evidence" value="ECO:0007669"/>
    <property type="project" value="Ensembl"/>
</dbReference>
<dbReference type="GO" id="GO:0008035">
    <property type="term" value="F:high-density lipoprotein particle binding"/>
    <property type="evidence" value="ECO:0007669"/>
    <property type="project" value="Ensembl"/>
</dbReference>
<dbReference type="GO" id="GO:0070653">
    <property type="term" value="F:high-density lipoprotein particle receptor binding"/>
    <property type="evidence" value="ECO:0007669"/>
    <property type="project" value="Ensembl"/>
</dbReference>
<dbReference type="GO" id="GO:0060228">
    <property type="term" value="F:phosphatidylcholine-sterol O-acyltransferase activator activity"/>
    <property type="evidence" value="ECO:0007669"/>
    <property type="project" value="Ensembl"/>
</dbReference>
<dbReference type="GO" id="GO:0005543">
    <property type="term" value="F:phospholipid binding"/>
    <property type="evidence" value="ECO:0007669"/>
    <property type="project" value="Ensembl"/>
</dbReference>
<dbReference type="GO" id="GO:0042803">
    <property type="term" value="F:protein homodimerization activity"/>
    <property type="evidence" value="ECO:0000250"/>
    <property type="project" value="UniProtKB"/>
</dbReference>
<dbReference type="GO" id="GO:0030325">
    <property type="term" value="P:adrenal gland development"/>
    <property type="evidence" value="ECO:0007669"/>
    <property type="project" value="Ensembl"/>
</dbReference>
<dbReference type="GO" id="GO:0034205">
    <property type="term" value="P:amyloid-beta formation"/>
    <property type="evidence" value="ECO:0007669"/>
    <property type="project" value="Ensembl"/>
</dbReference>
<dbReference type="GO" id="GO:0043534">
    <property type="term" value="P:blood vessel endothelial cell migration"/>
    <property type="evidence" value="ECO:0007669"/>
    <property type="project" value="Ensembl"/>
</dbReference>
<dbReference type="GO" id="GO:0071402">
    <property type="term" value="P:cellular response to lipoprotein particle stimulus"/>
    <property type="evidence" value="ECO:0007669"/>
    <property type="project" value="Ensembl"/>
</dbReference>
<dbReference type="GO" id="GO:0006695">
    <property type="term" value="P:cholesterol biosynthetic process"/>
    <property type="evidence" value="ECO:0007669"/>
    <property type="project" value="Ensembl"/>
</dbReference>
<dbReference type="GO" id="GO:0033344">
    <property type="term" value="P:cholesterol efflux"/>
    <property type="evidence" value="ECO:0007669"/>
    <property type="project" value="Ensembl"/>
</dbReference>
<dbReference type="GO" id="GO:0042632">
    <property type="term" value="P:cholesterol homeostasis"/>
    <property type="evidence" value="ECO:0007669"/>
    <property type="project" value="Ensembl"/>
</dbReference>
<dbReference type="GO" id="GO:0070508">
    <property type="term" value="P:cholesterol import"/>
    <property type="evidence" value="ECO:0007669"/>
    <property type="project" value="Ensembl"/>
</dbReference>
<dbReference type="GO" id="GO:0001935">
    <property type="term" value="P:endothelial cell proliferation"/>
    <property type="evidence" value="ECO:0007669"/>
    <property type="project" value="Ensembl"/>
</dbReference>
<dbReference type="GO" id="GO:0007186">
    <property type="term" value="P:G protein-coupled receptor signaling pathway"/>
    <property type="evidence" value="ECO:0007669"/>
    <property type="project" value="Ensembl"/>
</dbReference>
<dbReference type="GO" id="GO:0008211">
    <property type="term" value="P:glucocorticoid metabolic process"/>
    <property type="evidence" value="ECO:0007669"/>
    <property type="project" value="Ensembl"/>
</dbReference>
<dbReference type="GO" id="GO:0034380">
    <property type="term" value="P:high-density lipoprotein particle assembly"/>
    <property type="evidence" value="ECO:0007669"/>
    <property type="project" value="Ensembl"/>
</dbReference>
<dbReference type="GO" id="GO:0034375">
    <property type="term" value="P:high-density lipoprotein particle remodeling"/>
    <property type="evidence" value="ECO:0007669"/>
    <property type="project" value="Ensembl"/>
</dbReference>
<dbReference type="GO" id="GO:0007229">
    <property type="term" value="P:integrin-mediated signaling pathway"/>
    <property type="evidence" value="ECO:0007669"/>
    <property type="project" value="Ensembl"/>
</dbReference>
<dbReference type="GO" id="GO:0019915">
    <property type="term" value="P:lipid storage"/>
    <property type="evidence" value="ECO:0007669"/>
    <property type="project" value="Ensembl"/>
</dbReference>
<dbReference type="GO" id="GO:0042158">
    <property type="term" value="P:lipoprotein biosynthetic process"/>
    <property type="evidence" value="ECO:0007669"/>
    <property type="project" value="Ensembl"/>
</dbReference>
<dbReference type="GO" id="GO:0060354">
    <property type="term" value="P:negative regulation of cell adhesion molecule production"/>
    <property type="evidence" value="ECO:0007669"/>
    <property type="project" value="Ensembl"/>
</dbReference>
<dbReference type="GO" id="GO:0002719">
    <property type="term" value="P:negative regulation of cytokine production involved in immune response"/>
    <property type="evidence" value="ECO:0007669"/>
    <property type="project" value="Ensembl"/>
</dbReference>
<dbReference type="GO" id="GO:0034115">
    <property type="term" value="P:negative regulation of heterotypic cell-cell adhesion"/>
    <property type="evidence" value="ECO:0007669"/>
    <property type="project" value="Ensembl"/>
</dbReference>
<dbReference type="GO" id="GO:0050728">
    <property type="term" value="P:negative regulation of inflammatory response"/>
    <property type="evidence" value="ECO:0007669"/>
    <property type="project" value="Ensembl"/>
</dbReference>
<dbReference type="GO" id="GO:0032691">
    <property type="term" value="P:negative regulation of interleukin-1 beta production"/>
    <property type="evidence" value="ECO:0007669"/>
    <property type="project" value="Ensembl"/>
</dbReference>
<dbReference type="GO" id="GO:0010804">
    <property type="term" value="P:negative regulation of tumor necrosis factor-mediated signaling pathway"/>
    <property type="evidence" value="ECO:0007669"/>
    <property type="project" value="Ensembl"/>
</dbReference>
<dbReference type="GO" id="GO:0010903">
    <property type="term" value="P:negative regulation of very-low-density lipoprotein particle remodeling"/>
    <property type="evidence" value="ECO:0007669"/>
    <property type="project" value="Ensembl"/>
</dbReference>
<dbReference type="GO" id="GO:0006656">
    <property type="term" value="P:phosphatidylcholine biosynthetic process"/>
    <property type="evidence" value="ECO:0007669"/>
    <property type="project" value="Ensembl"/>
</dbReference>
<dbReference type="GO" id="GO:0033700">
    <property type="term" value="P:phospholipid efflux"/>
    <property type="evidence" value="ECO:0007669"/>
    <property type="project" value="Ensembl"/>
</dbReference>
<dbReference type="GO" id="GO:0055091">
    <property type="term" value="P:phospholipid homeostasis"/>
    <property type="evidence" value="ECO:0007669"/>
    <property type="project" value="Ensembl"/>
</dbReference>
<dbReference type="GO" id="GO:0010875">
    <property type="term" value="P:positive regulation of cholesterol efflux"/>
    <property type="evidence" value="ECO:0000250"/>
    <property type="project" value="UniProtKB"/>
</dbReference>
<dbReference type="GO" id="GO:0090205">
    <property type="term" value="P:positive regulation of cholesterol metabolic process"/>
    <property type="evidence" value="ECO:0007669"/>
    <property type="project" value="Ensembl"/>
</dbReference>
<dbReference type="GO" id="GO:0050766">
    <property type="term" value="P:positive regulation of phagocytosis"/>
    <property type="evidence" value="ECO:0000250"/>
    <property type="project" value="UniProtKB"/>
</dbReference>
<dbReference type="GO" id="GO:1902995">
    <property type="term" value="P:positive regulation of phospholipid efflux"/>
    <property type="evidence" value="ECO:0000250"/>
    <property type="project" value="UniProtKB"/>
</dbReference>
<dbReference type="GO" id="GO:0035025">
    <property type="term" value="P:positive regulation of Rho protein signal transduction"/>
    <property type="evidence" value="ECO:0007669"/>
    <property type="project" value="Ensembl"/>
</dbReference>
<dbReference type="GO" id="GO:0051496">
    <property type="term" value="P:positive regulation of stress fiber assembly"/>
    <property type="evidence" value="ECO:0007669"/>
    <property type="project" value="Ensembl"/>
</dbReference>
<dbReference type="GO" id="GO:1900026">
    <property type="term" value="P:positive regulation of substrate adhesion-dependent cell spreading"/>
    <property type="evidence" value="ECO:0007669"/>
    <property type="project" value="Ensembl"/>
</dbReference>
<dbReference type="GO" id="GO:0050821">
    <property type="term" value="P:protein stabilization"/>
    <property type="evidence" value="ECO:0000250"/>
    <property type="project" value="UniProtKB"/>
</dbReference>
<dbReference type="GO" id="GO:0032489">
    <property type="term" value="P:regulation of Cdc42 protein signal transduction"/>
    <property type="evidence" value="ECO:0007669"/>
    <property type="project" value="Ensembl"/>
</dbReference>
<dbReference type="GO" id="GO:0030300">
    <property type="term" value="P:regulation of intestinal cholesterol absorption"/>
    <property type="evidence" value="ECO:0007669"/>
    <property type="project" value="Ensembl"/>
</dbReference>
<dbReference type="GO" id="GO:0043691">
    <property type="term" value="P:reverse cholesterol transport"/>
    <property type="evidence" value="ECO:0007669"/>
    <property type="project" value="Ensembl"/>
</dbReference>
<dbReference type="GO" id="GO:0070328">
    <property type="term" value="P:triglyceride homeostasis"/>
    <property type="evidence" value="ECO:0007669"/>
    <property type="project" value="Ensembl"/>
</dbReference>
<dbReference type="GO" id="GO:0051180">
    <property type="term" value="P:vitamin transport"/>
    <property type="evidence" value="ECO:0007669"/>
    <property type="project" value="Ensembl"/>
</dbReference>
<dbReference type="FunFam" id="1.20.120.20:FF:000001">
    <property type="entry name" value="Apolipoprotein A-I"/>
    <property type="match status" value="1"/>
</dbReference>
<dbReference type="FunFam" id="1.20.5.20:FF:000001">
    <property type="entry name" value="apolipoprotein A-I"/>
    <property type="match status" value="1"/>
</dbReference>
<dbReference type="Gene3D" id="1.20.5.20">
    <property type="match status" value="1"/>
</dbReference>
<dbReference type="Gene3D" id="6.10.140.380">
    <property type="match status" value="1"/>
</dbReference>
<dbReference type="Gene3D" id="1.20.120.20">
    <property type="entry name" value="Apolipoprotein"/>
    <property type="match status" value="1"/>
</dbReference>
<dbReference type="InterPro" id="IPR000074">
    <property type="entry name" value="ApoA_E"/>
</dbReference>
<dbReference type="InterPro" id="IPR050163">
    <property type="entry name" value="Apolipoprotein_A1/A4/E"/>
</dbReference>
<dbReference type="PANTHER" id="PTHR18976">
    <property type="entry name" value="APOLIPOPROTEIN"/>
    <property type="match status" value="1"/>
</dbReference>
<dbReference type="PANTHER" id="PTHR18976:SF11">
    <property type="entry name" value="APOLIPOPROTEIN A-I"/>
    <property type="match status" value="1"/>
</dbReference>
<dbReference type="Pfam" id="PF01442">
    <property type="entry name" value="Apolipoprotein"/>
    <property type="match status" value="1"/>
</dbReference>
<dbReference type="SUPFAM" id="SSF58113">
    <property type="entry name" value="Apolipoprotein A-I"/>
    <property type="match status" value="1"/>
</dbReference>
<name>APOA1_CAVPO</name>
<accession>H0VVW3</accession>
<evidence type="ECO:0000250" key="1"/>
<evidence type="ECO:0000250" key="2">
    <source>
        <dbReference type="UniProtKB" id="G5BQH5"/>
    </source>
</evidence>
<evidence type="ECO:0000250" key="3">
    <source>
        <dbReference type="UniProtKB" id="P02647"/>
    </source>
</evidence>
<evidence type="ECO:0000250" key="4">
    <source>
        <dbReference type="UniProtKB" id="P02648"/>
    </source>
</evidence>
<evidence type="ECO:0000250" key="5">
    <source>
        <dbReference type="UniProtKB" id="P04639"/>
    </source>
</evidence>
<evidence type="ECO:0000250" key="6">
    <source>
        <dbReference type="UniProtKB" id="Q00623"/>
    </source>
</evidence>
<evidence type="ECO:0000255" key="7"/>
<evidence type="ECO:0000305" key="8"/>
<keyword id="KW-0153">Cholesterol metabolism</keyword>
<keyword id="KW-0325">Glycoprotein</keyword>
<keyword id="KW-0345">HDL</keyword>
<keyword id="KW-0443">Lipid metabolism</keyword>
<keyword id="KW-0445">Lipid transport</keyword>
<keyword id="KW-0449">Lipoprotein</keyword>
<keyword id="KW-0558">Oxidation</keyword>
<keyword id="KW-0564">Palmitate</keyword>
<keyword id="KW-0597">Phosphoprotein</keyword>
<keyword id="KW-1185">Reference proteome</keyword>
<keyword id="KW-0677">Repeat</keyword>
<keyword id="KW-0964">Secreted</keyword>
<keyword id="KW-0732">Signal</keyword>
<keyword id="KW-0753">Steroid metabolism</keyword>
<keyword id="KW-1207">Sterol metabolism</keyword>
<keyword id="KW-0813">Transport</keyword>
<organism>
    <name type="scientific">Cavia porcellus</name>
    <name type="common">Guinea pig</name>
    <dbReference type="NCBI Taxonomy" id="10141"/>
    <lineage>
        <taxon>Eukaryota</taxon>
        <taxon>Metazoa</taxon>
        <taxon>Chordata</taxon>
        <taxon>Craniata</taxon>
        <taxon>Vertebrata</taxon>
        <taxon>Euteleostomi</taxon>
        <taxon>Mammalia</taxon>
        <taxon>Eutheria</taxon>
        <taxon>Euarchontoglires</taxon>
        <taxon>Glires</taxon>
        <taxon>Rodentia</taxon>
        <taxon>Hystricomorpha</taxon>
        <taxon>Caviidae</taxon>
        <taxon>Cavia</taxon>
    </lineage>
</organism>
<proteinExistence type="inferred from homology"/>
<comment type="function">
    <text evidence="3">Participates in the reverse transport of cholesterol from tissues to the liver for excretion by promoting cholesterol efflux from tissues and by acting as a cofactor for the lecithin cholesterol acyltransferase (LCAT). As part of the SPAP complex, activates spermatozoa motility.</text>
</comment>
<comment type="subunit">
    <text evidence="2 3 5">Homodimer (By similarity). Interacts with APOA1BP and CLU. Component of a sperm activating protein complex (SPAP), consisting of APOA1, an immunoglobulin heavy chain, an immunoglobulin light chain and albumin. Interacts with NDRG1. Interacts with SCGB3A2 (By similarity). Interacts with NAXE and YJEFN3 (By similarity).</text>
</comment>
<comment type="subcellular location">
    <subcellularLocation>
        <location evidence="3">Secreted</location>
    </subcellularLocation>
</comment>
<comment type="PTM">
    <text evidence="4">Glycosylated.</text>
</comment>
<comment type="PTM">
    <text evidence="4">Palmitoylated.</text>
</comment>
<comment type="PTM">
    <text evidence="1">Phosphorylation sites are present in the extracellular medium.</text>
</comment>
<comment type="similarity">
    <text evidence="8">Belongs to the apolipoprotein A1/A4/E family.</text>
</comment>
<feature type="signal peptide" evidence="7">
    <location>
        <begin position="1"/>
        <end position="18"/>
    </location>
</feature>
<feature type="chain" id="PRO_0000431995" description="Proapolipoprotein A-I">
    <location>
        <begin position="19"/>
        <end position="264"/>
    </location>
</feature>
<feature type="chain" id="PRO_0000431996" description="Apolipoprotein A-I">
    <location>
        <begin position="25"/>
        <end position="264"/>
    </location>
</feature>
<feature type="chain" id="PRO_0000431997" description="Truncated apolipoprotein A-I" evidence="3">
    <location>
        <begin position="25"/>
        <end position="263"/>
    </location>
</feature>
<feature type="repeat" description="1">
    <location>
        <begin position="67"/>
        <end position="88"/>
    </location>
</feature>
<feature type="repeat" description="2">
    <location>
        <begin position="89"/>
        <end position="110"/>
    </location>
</feature>
<feature type="repeat" description="3; half-length">
    <location>
        <begin position="111"/>
        <end position="121"/>
    </location>
</feature>
<feature type="repeat" description="4">
    <location>
        <begin position="122"/>
        <end position="143"/>
    </location>
</feature>
<feature type="repeat" description="5">
    <location>
        <begin position="144"/>
        <end position="165"/>
    </location>
</feature>
<feature type="repeat" description="6">
    <location>
        <begin position="166"/>
        <end position="187"/>
    </location>
</feature>
<feature type="repeat" description="7">
    <location>
        <begin position="188"/>
        <end position="207"/>
    </location>
</feature>
<feature type="repeat" description="8">
    <location>
        <begin position="208"/>
        <end position="229"/>
    </location>
</feature>
<feature type="repeat" description="9; half-length">
    <location>
        <begin position="230"/>
        <end position="240"/>
    </location>
</feature>
<feature type="repeat" description="10">
    <location>
        <begin position="241"/>
        <end position="264"/>
    </location>
</feature>
<feature type="region of interest" description="10 X approximate tandem repeats">
    <location>
        <begin position="67"/>
        <end position="264"/>
    </location>
</feature>
<feature type="modified residue" description="Methionine sulfoxide" evidence="6">
    <location>
        <position position="193"/>
    </location>
</feature>
<gene>
    <name type="primary">APOA1</name>
</gene>